<gene>
    <name type="primary">VP30</name>
</gene>
<sequence length="281" mass="31641">MQQPRGRSRTRNHQTASSIYHETQLPSKPHYTNHHPRARSMSSTRSSAESSPTNHIPRARPPPTFNLSKPPPPPKDMCRNMKIGLPCTDPTCNRDHDLDNLTNRELLLLMARKMLPNTDKTFRSLQDCGSPSLSKGLSKDKQEQTKDVLTLENLGHILNYLHRSDIGKLDETSLRAALSLTCAGIRKTNRSLINTMTELHINHENLPQDQNGVIKQTYTGIHLDKGGQFEAALWQGWDKRSISLFVQAALYVMNNIPCESSTSVQASYDHFILPQSQSKGQ</sequence>
<comment type="function">
    <text evidence="1">Acts as a transcription anti-termination factor immediately after transcription initiation, but does not affect transcription elongation. This function has been found to be dependent on the formation of an RNA secondary structure at the transcription start site of the first gene (By similarity).</text>
</comment>
<comment type="subunit">
    <text evidence="1">Homooligomer.</text>
</comment>
<comment type="subcellular location">
    <subcellularLocation>
        <location>Virion</location>
    </subcellularLocation>
    <subcellularLocation>
        <location evidence="1">Host cytoplasm</location>
    </subcellularLocation>
    <text>Tightly bound in the nucleocapsid.</text>
</comment>
<comment type="PTM">
    <text evidence="1">Phosphorylated by host. Phosphorylation negatively regulates the transcription activation (By similarity).</text>
</comment>
<comment type="similarity">
    <text evidence="4">Belongs to the filoviridae transcriptional activator VP30 family.</text>
</comment>
<keyword id="KW-1035">Host cytoplasm</keyword>
<keyword id="KW-0479">Metal-binding</keyword>
<keyword id="KW-0597">Phosphoprotein</keyword>
<keyword id="KW-0804">Transcription</keyword>
<keyword id="KW-0543">Viral nucleoprotein</keyword>
<keyword id="KW-0946">Virion</keyword>
<keyword id="KW-0862">Zinc</keyword>
<keyword id="KW-0863">Zinc-finger</keyword>
<organism>
    <name type="scientific">Lake Victoria marburgvirus (strain Popp-67)</name>
    <name type="common">MARV</name>
    <name type="synonym">Marburg virus (strain West Germany/Popp/1967)</name>
    <dbReference type="NCBI Taxonomy" id="33728"/>
    <lineage>
        <taxon>Viruses</taxon>
        <taxon>Riboviria</taxon>
        <taxon>Orthornavirae</taxon>
        <taxon>Negarnaviricota</taxon>
        <taxon>Haploviricotina</taxon>
        <taxon>Monjiviricetes</taxon>
        <taxon>Mononegavirales</taxon>
        <taxon>Filoviridae</taxon>
        <taxon>Orthomarburgvirus</taxon>
        <taxon>Orthomarburgvirus marburgense</taxon>
    </lineage>
</organism>
<accession>P41326</accession>
<dbReference type="EMBL" id="X64405">
    <property type="protein sequence ID" value="CAA45746.1"/>
    <property type="molecule type" value="Genomic_RNA"/>
</dbReference>
<dbReference type="EMBL" id="Z29337">
    <property type="protein sequence ID" value="CAA82540.1"/>
    <property type="molecule type" value="Genomic_RNA"/>
</dbReference>
<dbReference type="PIR" id="S44052">
    <property type="entry name" value="S44052"/>
</dbReference>
<dbReference type="SMR" id="P41326"/>
<dbReference type="Proteomes" id="UP000007772">
    <property type="component" value="Genome"/>
</dbReference>
<dbReference type="GO" id="GO:0030430">
    <property type="term" value="C:host cell cytoplasm"/>
    <property type="evidence" value="ECO:0007669"/>
    <property type="project" value="UniProtKB-SubCell"/>
</dbReference>
<dbReference type="GO" id="GO:0019013">
    <property type="term" value="C:viral nucleocapsid"/>
    <property type="evidence" value="ECO:0007669"/>
    <property type="project" value="UniProtKB-KW"/>
</dbReference>
<dbReference type="GO" id="GO:0003723">
    <property type="term" value="F:RNA binding"/>
    <property type="evidence" value="ECO:0007669"/>
    <property type="project" value="InterPro"/>
</dbReference>
<dbReference type="GO" id="GO:0008270">
    <property type="term" value="F:zinc ion binding"/>
    <property type="evidence" value="ECO:0007669"/>
    <property type="project" value="UniProtKB-KW"/>
</dbReference>
<dbReference type="FunFam" id="1.20.120.1160:FF:000001">
    <property type="entry name" value="Minor nucleoprotein VP30"/>
    <property type="match status" value="1"/>
</dbReference>
<dbReference type="Gene3D" id="1.20.120.1160">
    <property type="match status" value="1"/>
</dbReference>
<dbReference type="InterPro" id="IPR014459">
    <property type="entry name" value="VP30_FiloV"/>
</dbReference>
<dbReference type="Pfam" id="PF11507">
    <property type="entry name" value="Transcript_VP30"/>
    <property type="match status" value="1"/>
</dbReference>
<dbReference type="PIRSF" id="PIRSF011356">
    <property type="entry name" value="VP30_FiloV"/>
    <property type="match status" value="1"/>
</dbReference>
<proteinExistence type="inferred from homology"/>
<name>VP30_MABVP</name>
<organismHost>
    <name type="scientific">Chlorocebus aethiops</name>
    <name type="common">Green monkey</name>
    <name type="synonym">Cercopithecus aethiops</name>
    <dbReference type="NCBI Taxonomy" id="9534"/>
</organismHost>
<organismHost>
    <name type="scientific">Homo sapiens</name>
    <name type="common">Human</name>
    <dbReference type="NCBI Taxonomy" id="9606"/>
</organismHost>
<organismHost>
    <name type="scientific">Rousettus aegyptiacus</name>
    <name type="common">Egyptian fruit bat</name>
    <name type="synonym">Pteropus aegyptiacus</name>
    <dbReference type="NCBI Taxonomy" id="9407"/>
</organismHost>
<feature type="chain" id="PRO_0000222160" description="Transcriptional activator VP30">
    <location>
        <begin position="1"/>
        <end position="281"/>
    </location>
</feature>
<feature type="zinc finger region" description="C3H1-type; atypical" evidence="1">
    <location>
        <begin position="78"/>
        <end position="96"/>
    </location>
</feature>
<feature type="region of interest" description="Disordered" evidence="3">
    <location>
        <begin position="1"/>
        <end position="77"/>
    </location>
</feature>
<feature type="region of interest" description="Disordered" evidence="3">
    <location>
        <begin position="122"/>
        <end position="141"/>
    </location>
</feature>
<feature type="compositionally biased region" description="Basic residues" evidence="3">
    <location>
        <begin position="1"/>
        <end position="12"/>
    </location>
</feature>
<feature type="compositionally biased region" description="Polar residues" evidence="3">
    <location>
        <begin position="13"/>
        <end position="26"/>
    </location>
</feature>
<feature type="compositionally biased region" description="Low complexity" evidence="3">
    <location>
        <begin position="39"/>
        <end position="51"/>
    </location>
</feature>
<feature type="compositionally biased region" description="Pro residues" evidence="3">
    <location>
        <begin position="59"/>
        <end position="75"/>
    </location>
</feature>
<feature type="compositionally biased region" description="Polar residues" evidence="3">
    <location>
        <begin position="123"/>
        <end position="135"/>
    </location>
</feature>
<protein>
    <recommendedName>
        <fullName evidence="2">Transcriptional activator VP30</fullName>
    </recommendedName>
    <alternativeName>
        <fullName>Minor nucleoprotein VP30</fullName>
    </alternativeName>
</protein>
<evidence type="ECO:0000250" key="1"/>
<evidence type="ECO:0000250" key="2">
    <source>
        <dbReference type="UniProtKB" id="Q05323"/>
    </source>
</evidence>
<evidence type="ECO:0000256" key="3">
    <source>
        <dbReference type="SAM" id="MobiDB-lite"/>
    </source>
</evidence>
<evidence type="ECO:0000305" key="4"/>
<reference key="1">
    <citation type="journal article" date="1995" name="Biochem. Mol. Biol. Int.">
        <title>Complete nucleotide sequences of Marburg virus genes 5 and 6 encoding VP30 and VP24 proteins.</title>
        <authorList>
            <person name="Bukreyev A.A."/>
            <person name="Belanov E.F."/>
            <person name="Blinov V.M."/>
            <person name="Netesov S.V."/>
        </authorList>
    </citation>
    <scope>NUCLEOTIDE SEQUENCE [GENOMIC RNA]</scope>
</reference>
<reference key="2">
    <citation type="journal article" date="1995" name="Arch. Virol.">
        <title>The complete nucleotide sequence of the Popp (1967) strain of Marburg virus: a comparison with the Musoke (1980) strain.</title>
        <authorList>
            <person name="Bukreyev A.A."/>
            <person name="Volchkov V.E."/>
            <person name="Blinov V.M."/>
            <person name="Dryga S.A."/>
            <person name="Netesov S.V."/>
        </authorList>
    </citation>
    <scope>NUCLEOTIDE SEQUENCE [GENOMIC RNA]</scope>
</reference>